<protein>
    <recommendedName>
        <fullName>Nicotinate dehydrogenase subunit B</fullName>
        <ecNumber>1.17.2.1</ecNumber>
    </recommendedName>
    <alternativeName>
        <fullName>Nicotinate degradation protein B</fullName>
    </alternativeName>
    <alternativeName>
        <fullName>Nicotinate dehydrogenase large subunit</fullName>
    </alternativeName>
</protein>
<keyword id="KW-0058">Aromatic hydrocarbons catabolism</keyword>
<keyword id="KW-0349">Heme</keyword>
<keyword id="KW-0408">Iron</keyword>
<keyword id="KW-0472">Membrane</keyword>
<keyword id="KW-0479">Metal-binding</keyword>
<keyword id="KW-0500">Molybdenum</keyword>
<keyword id="KW-0560">Oxidoreductase</keyword>
<keyword id="KW-1185">Reference proteome</keyword>
<keyword id="KW-0677">Repeat</keyword>
<keyword id="KW-0812">Transmembrane</keyword>
<keyword id="KW-1133">Transmembrane helix</keyword>
<sequence>MNHSQQVPSRDQLLAKTGVLLIVDQITPPSGPVAKGVTPTVKERELALFIAVSDDGMVYAFNGHVDLGTGIRTSLAQIVAEELDLRMDQVHMVLGDTERAPNQGATIASATLQISAVPLRKAAATARRYLLQQAALRLGCPPEMLRIEDGTVIASNGSTLSFAELVQGKNHQLHIADDAPLKAIEDYRLVGRSAPRVDIPGKATGELTYVHDMRLPNMLHGRVIRPPYAGHDSGDFVGNSLLAVDESSIAHLPGVVAVVVIRDFVGVVAEREEQAIRAAHELKVSWKPFTGKLPDLSDVAQAIRDNPRVQRTVLDQGDVDGGIANASQRLSRSYLWPYQLHASIGPSCALADFTAGQIRVWSGTQNPHLLRADLAWLLACDEARIEIIRMEAAGCYGRNCADDVCADAVLLSRAVQRPVRVQLTREQEHVWEPKGTAQLMEIDGGLNADGSVAAYDFQTSYPSNGAPTLALLLTGAVEPVPALFEMGDRTSIPPYDYEHMRVTINDMTPLVRASWMRGVSAMPNSFAHESYIDELAFAAGVDPVEYRLKHLSDPRAIDLVKATAERAQWQPHTRPMQTQAEGDVLRGRGFAYARYIHSKFPGFGAAWAAWVADVAVDRRTGEVAVTRVVIGHDAGMMVNPEGVRHQIHGNVIQSTSRVLKEQVSFEESTVASKEWGGYPILTFPELPAIDVMMLPRQHEPPMGSGESASVPSAAAIANAIFDATGIRFRELPITAERVRAALGGEGQGPDAPAPAQPSTKRSKWWFGSLAGVFGAALGMLATALPWRAEIAPVTPPGVGSWSAAMLERGRQVAAAGDCAVCHTVSGGKANAGGLAMDTPFGTLYSTNITPDPETGIGRWSFAAFERAMREGISRDGRHLYPAFPYTSFRNINDADMQALYAYLMSQTPVRQEAPANQMRFPFNQRPLMAGWNARFLQRGEYQPDPQRSAQWNRGAYLVDGLGHCTACHSPRNLMGAEKGGSSYLAGGMVDGWEAPALNALGKSSTPWSEDELFNYLSTGFSEKHGVAAGPMGPVVSELATLPKSDVRAIAHYLSSLEGEPQALAANAAPQVDTHVSLSNGERVFKGACLGCHSDGLGPKLFGVSPSMAVNSNVHSDLPDNLLRVVLHGIPTPATRDLGYMPGFKDSLSDRQVADLAAYLRHRFAADKPAWQGLASKAAQVRANPGSH</sequence>
<reference key="1">
    <citation type="journal article" date="2009" name="Biodegradation">
        <title>Cloning, heterologous expression, and functional characterization of the nicotinate dehydrogenase gene from Pseudomonas putida KT2440.</title>
        <authorList>
            <person name="Yang Y."/>
            <person name="Yuan S."/>
            <person name="Chen T."/>
            <person name="Ma P."/>
            <person name="Shang G."/>
            <person name="Dai Y."/>
        </authorList>
    </citation>
    <scope>NUCLEOTIDE SEQUENCE [GENOMIC DNA]</scope>
    <scope>FUNCTION</scope>
    <scope>DISRUPTION PHENOTYPE</scope>
    <source>
        <strain>ATCC 47054 / DSM 6125 / CFBP 8728 / NCIMB 11950 / KT2440</strain>
    </source>
</reference>
<reference key="2">
    <citation type="journal article" date="2002" name="Environ. Microbiol.">
        <title>Complete genome sequence and comparative analysis of the metabolically versatile Pseudomonas putida KT2440.</title>
        <authorList>
            <person name="Nelson K.E."/>
            <person name="Weinel C."/>
            <person name="Paulsen I.T."/>
            <person name="Dodson R.J."/>
            <person name="Hilbert H."/>
            <person name="Martins dos Santos V.A.P."/>
            <person name="Fouts D.E."/>
            <person name="Gill S.R."/>
            <person name="Pop M."/>
            <person name="Holmes M."/>
            <person name="Brinkac L.M."/>
            <person name="Beanan M.J."/>
            <person name="DeBoy R.T."/>
            <person name="Daugherty S.C."/>
            <person name="Kolonay J.F."/>
            <person name="Madupu R."/>
            <person name="Nelson W.C."/>
            <person name="White O."/>
            <person name="Peterson J.D."/>
            <person name="Khouri H.M."/>
            <person name="Hance I."/>
            <person name="Chris Lee P."/>
            <person name="Holtzapple E.K."/>
            <person name="Scanlan D."/>
            <person name="Tran K."/>
            <person name="Moazzez A."/>
            <person name="Utterback T.R."/>
            <person name="Rizzo M."/>
            <person name="Lee K."/>
            <person name="Kosack D."/>
            <person name="Moestl D."/>
            <person name="Wedler H."/>
            <person name="Lauber J."/>
            <person name="Stjepandic D."/>
            <person name="Hoheisel J."/>
            <person name="Straetz M."/>
            <person name="Heim S."/>
            <person name="Kiewitz C."/>
            <person name="Eisen J.A."/>
            <person name="Timmis K.N."/>
            <person name="Duesterhoeft A."/>
            <person name="Tuemmler B."/>
            <person name="Fraser C.M."/>
        </authorList>
    </citation>
    <scope>NUCLEOTIDE SEQUENCE [LARGE SCALE GENOMIC DNA]</scope>
    <source>
        <strain>ATCC 47054 / DSM 6125 / CFBP 8728 / NCIMB 11950 / KT2440</strain>
    </source>
</reference>
<reference key="3">
    <citation type="journal article" date="2008" name="Proc. Natl. Acad. Sci. U.S.A.">
        <title>Deciphering the genetic determinants for aerobic nicotinic acid degradation: the nic cluster from Pseudomonas putida KT2440.</title>
        <authorList>
            <person name="Jimenez J.I."/>
            <person name="Canales A."/>
            <person name="Jimenez-Barbero J."/>
            <person name="Ginalski K."/>
            <person name="Rychlewski L."/>
            <person name="Garcia J.L."/>
            <person name="Diaz E."/>
        </authorList>
    </citation>
    <scope>FUNCTION</scope>
    <scope>CATALYTIC ACTIVITY</scope>
    <scope>PATHWAY</scope>
    <scope>DISRUPTION PHENOTYPE</scope>
    <source>
        <strain>ATCC 47054 / DSM 6125 / CFBP 8728 / NCIMB 11950 / KT2440</strain>
    </source>
</reference>
<reference key="4">
    <citation type="journal article" date="2011" name="Environ. Microbiol.">
        <title>A finely tuned regulatory circuit of the nicotinic acid degradation pathway in Pseudomonas putida.</title>
        <authorList>
            <person name="Jimenez J.I."/>
            <person name="Juarez J.F."/>
            <person name="Garcia J.L."/>
            <person name="Diaz E."/>
        </authorList>
    </citation>
    <scope>INDUCTION</scope>
    <source>
        <strain>ATCC 47054 / DSM 6125 / CFBP 8728 / NCIMB 11950 / KT2440</strain>
    </source>
</reference>
<evidence type="ECO:0000250" key="1"/>
<evidence type="ECO:0000255" key="2"/>
<evidence type="ECO:0000255" key="3">
    <source>
        <dbReference type="PROSITE-ProRule" id="PRU00433"/>
    </source>
</evidence>
<evidence type="ECO:0000269" key="4">
    <source>
    </source>
</evidence>
<evidence type="ECO:0000269" key="5">
    <source>
    </source>
</evidence>
<evidence type="ECO:0000269" key="6">
    <source>
    </source>
</evidence>
<evidence type="ECO:0000305" key="7"/>
<feature type="chain" id="PRO_0000418465" description="Nicotinate dehydrogenase subunit B">
    <location>
        <begin position="1"/>
        <end position="1187"/>
    </location>
</feature>
<feature type="transmembrane region" description="Helical" evidence="2">
    <location>
        <begin position="764"/>
        <end position="784"/>
    </location>
</feature>
<feature type="domain" description="Cytochrome c 1" evidence="3">
    <location>
        <begin position="804"/>
        <end position="907"/>
    </location>
</feature>
<feature type="domain" description="Cytochrome c 2" evidence="3">
    <location>
        <begin position="949"/>
        <end position="1057"/>
    </location>
</feature>
<feature type="domain" description="Cytochrome c 3" evidence="3">
    <location>
        <begin position="1075"/>
        <end position="1163"/>
    </location>
</feature>
<feature type="binding site" description="covalent" evidence="3">
    <location>
        <position position="818"/>
    </location>
    <ligand>
        <name>heme c</name>
        <dbReference type="ChEBI" id="CHEBI:61717"/>
        <label>1</label>
    </ligand>
</feature>
<feature type="binding site" description="covalent" evidence="3">
    <location>
        <position position="821"/>
    </location>
    <ligand>
        <name>heme c</name>
        <dbReference type="ChEBI" id="CHEBI:61717"/>
        <label>1</label>
    </ligand>
</feature>
<feature type="binding site" description="axial binding residue" evidence="3">
    <location>
        <position position="822"/>
    </location>
    <ligand>
        <name>heme c</name>
        <dbReference type="ChEBI" id="CHEBI:61717"/>
        <label>1</label>
    </ligand>
    <ligandPart>
        <name>Fe</name>
        <dbReference type="ChEBI" id="CHEBI:18248"/>
    </ligandPart>
</feature>
<feature type="binding site" description="covalent" evidence="3">
    <location>
        <position position="964"/>
    </location>
    <ligand>
        <name>heme c</name>
        <dbReference type="ChEBI" id="CHEBI:61717"/>
        <label>2</label>
    </ligand>
</feature>
<feature type="binding site" description="covalent" evidence="3">
    <location>
        <position position="967"/>
    </location>
    <ligand>
        <name>heme c</name>
        <dbReference type="ChEBI" id="CHEBI:61717"/>
        <label>2</label>
    </ligand>
</feature>
<feature type="binding site" description="axial binding residue" evidence="3">
    <location>
        <position position="968"/>
    </location>
    <ligand>
        <name>heme c</name>
        <dbReference type="ChEBI" id="CHEBI:61717"/>
        <label>2</label>
    </ligand>
    <ligandPart>
        <name>Fe</name>
        <dbReference type="ChEBI" id="CHEBI:18248"/>
    </ligandPart>
</feature>
<feature type="binding site" description="covalent" evidence="3">
    <location>
        <position position="1088"/>
    </location>
    <ligand>
        <name>heme c</name>
        <dbReference type="ChEBI" id="CHEBI:61717"/>
        <label>3</label>
    </ligand>
</feature>
<feature type="binding site" description="covalent" evidence="3">
    <location>
        <position position="1091"/>
    </location>
    <ligand>
        <name>heme c</name>
        <dbReference type="ChEBI" id="CHEBI:61717"/>
        <label>3</label>
    </ligand>
</feature>
<feature type="binding site" description="axial binding residue" evidence="3">
    <location>
        <position position="1092"/>
    </location>
    <ligand>
        <name>heme c</name>
        <dbReference type="ChEBI" id="CHEBI:61717"/>
        <label>3</label>
    </ligand>
    <ligandPart>
        <name>Fe</name>
        <dbReference type="ChEBI" id="CHEBI:18248"/>
    </ligandPart>
</feature>
<name>NICB_PSEPK</name>
<gene>
    <name type="primary">nicB</name>
    <name type="synonym">ndhL</name>
    <name type="ordered locus">PP_3948</name>
</gene>
<dbReference type="EC" id="1.17.2.1"/>
<dbReference type="EMBL" id="EU604833">
    <property type="protein sequence ID" value="ACC64340.1"/>
    <property type="molecule type" value="Genomic_DNA"/>
</dbReference>
<dbReference type="EMBL" id="AE015451">
    <property type="protein sequence ID" value="AAN69542.1"/>
    <property type="molecule type" value="Genomic_DNA"/>
</dbReference>
<dbReference type="RefSeq" id="NP_746078.1">
    <property type="nucleotide sequence ID" value="NC_002947.4"/>
</dbReference>
<dbReference type="RefSeq" id="WP_010954765.1">
    <property type="nucleotide sequence ID" value="NZ_CP169744.1"/>
</dbReference>
<dbReference type="SMR" id="Q88FX8"/>
<dbReference type="STRING" id="160488.PP_3948"/>
<dbReference type="PaxDb" id="160488-PP_3948"/>
<dbReference type="KEGG" id="ppu:PP_3948"/>
<dbReference type="PATRIC" id="fig|160488.4.peg.4204"/>
<dbReference type="eggNOG" id="COG1529">
    <property type="taxonomic scope" value="Bacteria"/>
</dbReference>
<dbReference type="eggNOG" id="COG2010">
    <property type="taxonomic scope" value="Bacteria"/>
</dbReference>
<dbReference type="HOGENOM" id="CLU_007015_1_0_6"/>
<dbReference type="OrthoDB" id="6073217at2"/>
<dbReference type="PhylomeDB" id="Q88FX8"/>
<dbReference type="BioCyc" id="MetaCyc:G1G01-4213-MONOMER"/>
<dbReference type="BioCyc" id="PPUT160488:G1G01-4213-MONOMER"/>
<dbReference type="BRENDA" id="1.17.1.5">
    <property type="organism ID" value="5092"/>
</dbReference>
<dbReference type="BRENDA" id="1.17.2.1">
    <property type="organism ID" value="5092"/>
</dbReference>
<dbReference type="UniPathway" id="UPA01010"/>
<dbReference type="Proteomes" id="UP000000556">
    <property type="component" value="Chromosome"/>
</dbReference>
<dbReference type="GO" id="GO:0016020">
    <property type="term" value="C:membrane"/>
    <property type="evidence" value="ECO:0007669"/>
    <property type="project" value="UniProtKB-SubCell"/>
</dbReference>
<dbReference type="GO" id="GO:0009055">
    <property type="term" value="F:electron transfer activity"/>
    <property type="evidence" value="ECO:0007669"/>
    <property type="project" value="InterPro"/>
</dbReference>
<dbReference type="GO" id="GO:0020037">
    <property type="term" value="F:heme binding"/>
    <property type="evidence" value="ECO:0007669"/>
    <property type="project" value="InterPro"/>
</dbReference>
<dbReference type="GO" id="GO:0046872">
    <property type="term" value="F:metal ion binding"/>
    <property type="evidence" value="ECO:0007669"/>
    <property type="project" value="UniProtKB-KW"/>
</dbReference>
<dbReference type="GO" id="GO:0016725">
    <property type="term" value="F:oxidoreductase activity, acting on CH or CH2 groups"/>
    <property type="evidence" value="ECO:0000314"/>
    <property type="project" value="UniProtKB"/>
</dbReference>
<dbReference type="GO" id="GO:1901848">
    <property type="term" value="P:nicotinate catabolic process"/>
    <property type="evidence" value="ECO:0000314"/>
    <property type="project" value="UniProtKB"/>
</dbReference>
<dbReference type="FunFam" id="1.10.760.10:FF:000057">
    <property type="entry name" value="Nicotinate dehydrogenase subunit B"/>
    <property type="match status" value="1"/>
</dbReference>
<dbReference type="FunFam" id="3.30.365.10:FF:000033">
    <property type="entry name" value="Nicotinate dehydrogenase subunit B"/>
    <property type="match status" value="1"/>
</dbReference>
<dbReference type="FunFam" id="3.30.365.10:FF:000038">
    <property type="entry name" value="Nicotinate dehydrogenase subunit B"/>
    <property type="match status" value="1"/>
</dbReference>
<dbReference type="Gene3D" id="3.90.1170.50">
    <property type="entry name" value="Aldehyde oxidase/xanthine dehydrogenase, a/b hammerhead"/>
    <property type="match status" value="1"/>
</dbReference>
<dbReference type="Gene3D" id="3.30.365.10">
    <property type="entry name" value="Aldehyde oxidase/xanthine dehydrogenase, molybdopterin binding domain"/>
    <property type="match status" value="4"/>
</dbReference>
<dbReference type="Gene3D" id="1.10.760.10">
    <property type="entry name" value="Cytochrome c-like domain"/>
    <property type="match status" value="3"/>
</dbReference>
<dbReference type="InterPro" id="IPR000674">
    <property type="entry name" value="Ald_Oxase/Xan_DH_a/b"/>
</dbReference>
<dbReference type="InterPro" id="IPR036856">
    <property type="entry name" value="Ald_Oxase/Xan_DH_a/b_sf"/>
</dbReference>
<dbReference type="InterPro" id="IPR008274">
    <property type="entry name" value="AldOxase/xan_DH_MoCoBD1"/>
</dbReference>
<dbReference type="InterPro" id="IPR046867">
    <property type="entry name" value="AldOxase/xan_DH_MoCoBD2"/>
</dbReference>
<dbReference type="InterPro" id="IPR037165">
    <property type="entry name" value="AldOxase/xan_DH_Mopterin-bd_sf"/>
</dbReference>
<dbReference type="InterPro" id="IPR009056">
    <property type="entry name" value="Cyt_c-like_dom"/>
</dbReference>
<dbReference type="InterPro" id="IPR036909">
    <property type="entry name" value="Cyt_c-like_dom_sf"/>
</dbReference>
<dbReference type="InterPro" id="IPR052516">
    <property type="entry name" value="N-heterocyclic_Hydroxylase"/>
</dbReference>
<dbReference type="PANTHER" id="PTHR47495">
    <property type="entry name" value="ALDEHYDE DEHYDROGENASE"/>
    <property type="match status" value="1"/>
</dbReference>
<dbReference type="PANTHER" id="PTHR47495:SF1">
    <property type="entry name" value="BLL3820 PROTEIN"/>
    <property type="match status" value="1"/>
</dbReference>
<dbReference type="Pfam" id="PF00034">
    <property type="entry name" value="Cytochrom_C"/>
    <property type="match status" value="1"/>
</dbReference>
<dbReference type="Pfam" id="PF13442">
    <property type="entry name" value="Cytochrome_CBB3"/>
    <property type="match status" value="1"/>
</dbReference>
<dbReference type="Pfam" id="PF02738">
    <property type="entry name" value="MoCoBD_1"/>
    <property type="match status" value="1"/>
</dbReference>
<dbReference type="Pfam" id="PF20256">
    <property type="entry name" value="MoCoBD_2"/>
    <property type="match status" value="2"/>
</dbReference>
<dbReference type="SMART" id="SM01008">
    <property type="entry name" value="Ald_Xan_dh_C"/>
    <property type="match status" value="1"/>
</dbReference>
<dbReference type="SUPFAM" id="SSF54665">
    <property type="entry name" value="CO dehydrogenase molybdoprotein N-domain-like"/>
    <property type="match status" value="1"/>
</dbReference>
<dbReference type="SUPFAM" id="SSF46626">
    <property type="entry name" value="Cytochrome c"/>
    <property type="match status" value="3"/>
</dbReference>
<dbReference type="SUPFAM" id="SSF56003">
    <property type="entry name" value="Molybdenum cofactor-binding domain"/>
    <property type="match status" value="2"/>
</dbReference>
<dbReference type="PROSITE" id="PS51007">
    <property type="entry name" value="CYTC"/>
    <property type="match status" value="3"/>
</dbReference>
<comment type="function">
    <text evidence="4 5">Subunit of the two-component enzyme NicAB that mediates nicotinate hydroxylation, the first step in the aerobic nicotinate degradation pathway. Mediates conversion of nicotinate into 6-hydroxynicotinate (6HNA).</text>
</comment>
<comment type="catalytic activity">
    <reaction evidence="4">
        <text>2 Fe(III)-[cytochrome] + nicotinate + H2O = 2 Fe(II)-[cytochrome] + 6-hydroxynicotinate + 2 H(+)</text>
        <dbReference type="Rhea" id="RHEA:27417"/>
        <dbReference type="Rhea" id="RHEA-COMP:11777"/>
        <dbReference type="Rhea" id="RHEA-COMP:11778"/>
        <dbReference type="ChEBI" id="CHEBI:15377"/>
        <dbReference type="ChEBI" id="CHEBI:15378"/>
        <dbReference type="ChEBI" id="CHEBI:29033"/>
        <dbReference type="ChEBI" id="CHEBI:29034"/>
        <dbReference type="ChEBI" id="CHEBI:32544"/>
        <dbReference type="ChEBI" id="CHEBI:57664"/>
        <dbReference type="EC" id="1.17.2.1"/>
    </reaction>
</comment>
<comment type="cofactor">
    <cofactor evidence="1">
        <name>Mo-molybdopterin cytosine dinucleotide</name>
        <dbReference type="ChEBI" id="CHEBI:71308"/>
    </cofactor>
    <text evidence="1">Binds 1 Mo-molybdopterin cytosine dinucleotide (Mo-MCD) cofactor per subunit.</text>
</comment>
<comment type="pathway">
    <text evidence="4">Cofactor degradation; nicotinate degradation.</text>
</comment>
<comment type="subcellular location">
    <subcellularLocation>
        <location evidence="7">Membrane</location>
        <topology evidence="7">Single-pass membrane protein</topology>
    </subcellularLocation>
</comment>
<comment type="induction">
    <text evidence="6">Repressed by NicS in the absence of 6-hydroxynicotinate (6HNA) or nicotinate inducers. In presence of 6HNA, repression is alleviated.</text>
</comment>
<comment type="domain">
    <text evidence="4">The cytochrome c domains probably enable interaction with the electron transfer chain, possibly by delivering the electrons to a cytochrome oxidase.</text>
</comment>
<comment type="disruption phenotype">
    <text evidence="4 5">Cells lacking both nicA and nicB lack the ability to hydroxylate nicotinate. Cells do not grow in a nicotinate medium but grow in a 6-hydroxynicotinate medium.</text>
</comment>
<proteinExistence type="evidence at protein level"/>
<organism>
    <name type="scientific">Pseudomonas putida (strain ATCC 47054 / DSM 6125 / CFBP 8728 / NCIMB 11950 / KT2440)</name>
    <dbReference type="NCBI Taxonomy" id="160488"/>
    <lineage>
        <taxon>Bacteria</taxon>
        <taxon>Pseudomonadati</taxon>
        <taxon>Pseudomonadota</taxon>
        <taxon>Gammaproteobacteria</taxon>
        <taxon>Pseudomonadales</taxon>
        <taxon>Pseudomonadaceae</taxon>
        <taxon>Pseudomonas</taxon>
    </lineage>
</organism>
<accession>Q88FX8</accession>